<protein>
    <recommendedName>
        <fullName evidence="1">NADPH-dependent 7-cyano-7-deazaguanine reductase</fullName>
        <ecNumber evidence="1">1.7.1.13</ecNumber>
    </recommendedName>
    <alternativeName>
        <fullName evidence="1">7-cyano-7-carbaguanine reductase</fullName>
    </alternativeName>
    <alternativeName>
        <fullName evidence="1">NADPH-dependent nitrile oxidoreductase</fullName>
    </alternativeName>
    <alternativeName>
        <fullName evidence="1">PreQ(0) reductase</fullName>
    </alternativeName>
</protein>
<evidence type="ECO:0000255" key="1">
    <source>
        <dbReference type="HAMAP-Rule" id="MF_00817"/>
    </source>
</evidence>
<dbReference type="EC" id="1.7.1.13" evidence="1"/>
<dbReference type="EMBL" id="CP001011">
    <property type="protein sequence ID" value="ACB92898.1"/>
    <property type="molecule type" value="Genomic_DNA"/>
</dbReference>
<dbReference type="RefSeq" id="WP_004090995.1">
    <property type="nucleotide sequence ID" value="NC_010577.1"/>
</dbReference>
<dbReference type="SMR" id="B2I6I8"/>
<dbReference type="GeneID" id="93905219"/>
<dbReference type="KEGG" id="xfn:XfasM23_1487"/>
<dbReference type="HOGENOM" id="CLU_054738_0_0_6"/>
<dbReference type="UniPathway" id="UPA00392"/>
<dbReference type="Proteomes" id="UP000001698">
    <property type="component" value="Chromosome"/>
</dbReference>
<dbReference type="GO" id="GO:0005737">
    <property type="term" value="C:cytoplasm"/>
    <property type="evidence" value="ECO:0007669"/>
    <property type="project" value="UniProtKB-SubCell"/>
</dbReference>
<dbReference type="GO" id="GO:0033739">
    <property type="term" value="F:preQ1 synthase activity"/>
    <property type="evidence" value="ECO:0007669"/>
    <property type="project" value="UniProtKB-UniRule"/>
</dbReference>
<dbReference type="GO" id="GO:0008616">
    <property type="term" value="P:queuosine biosynthetic process"/>
    <property type="evidence" value="ECO:0007669"/>
    <property type="project" value="UniProtKB-UniRule"/>
</dbReference>
<dbReference type="GO" id="GO:0006400">
    <property type="term" value="P:tRNA modification"/>
    <property type="evidence" value="ECO:0007669"/>
    <property type="project" value="UniProtKB-UniRule"/>
</dbReference>
<dbReference type="Gene3D" id="3.30.1130.10">
    <property type="match status" value="2"/>
</dbReference>
<dbReference type="HAMAP" id="MF_00817">
    <property type="entry name" value="QueF_type2"/>
    <property type="match status" value="1"/>
</dbReference>
<dbReference type="InterPro" id="IPR043133">
    <property type="entry name" value="GTP-CH-I_C/QueF"/>
</dbReference>
<dbReference type="InterPro" id="IPR050084">
    <property type="entry name" value="NADPH_dep_7-cyano-7-deazaG_red"/>
</dbReference>
<dbReference type="InterPro" id="IPR029500">
    <property type="entry name" value="QueF"/>
</dbReference>
<dbReference type="InterPro" id="IPR029139">
    <property type="entry name" value="QueF_N"/>
</dbReference>
<dbReference type="InterPro" id="IPR016428">
    <property type="entry name" value="QueF_type2"/>
</dbReference>
<dbReference type="NCBIfam" id="TIGR03138">
    <property type="entry name" value="QueF"/>
    <property type="match status" value="1"/>
</dbReference>
<dbReference type="PANTHER" id="PTHR34354">
    <property type="entry name" value="NADPH-DEPENDENT 7-CYANO-7-DEAZAGUANINE REDUCTASE"/>
    <property type="match status" value="1"/>
</dbReference>
<dbReference type="PANTHER" id="PTHR34354:SF1">
    <property type="entry name" value="NADPH-DEPENDENT 7-CYANO-7-DEAZAGUANINE REDUCTASE"/>
    <property type="match status" value="1"/>
</dbReference>
<dbReference type="Pfam" id="PF14489">
    <property type="entry name" value="QueF"/>
    <property type="match status" value="1"/>
</dbReference>
<dbReference type="Pfam" id="PF14819">
    <property type="entry name" value="QueF_N"/>
    <property type="match status" value="1"/>
</dbReference>
<dbReference type="PIRSF" id="PIRSF004750">
    <property type="entry name" value="Nitrile_oxidored_YqcD_prd"/>
    <property type="match status" value="1"/>
</dbReference>
<dbReference type="SUPFAM" id="SSF55620">
    <property type="entry name" value="Tetrahydrobiopterin biosynthesis enzymes-like"/>
    <property type="match status" value="1"/>
</dbReference>
<proteinExistence type="inferred from homology"/>
<keyword id="KW-0963">Cytoplasm</keyword>
<keyword id="KW-0521">NADP</keyword>
<keyword id="KW-0560">Oxidoreductase</keyword>
<keyword id="KW-0671">Queuosine biosynthesis</keyword>
<sequence>MNTSHYSVLGHTVPYPKVYDPSLLFPISRAVGRTQIGIGVVLPFVGEDRWHAYELSWLDARGKPCVATATFHVPCDSPYLIESKSLKLYLNSFSAEVFNRAEALRLRIAADLSACAGAAVAVEFGLPPVGSGDKEISLDRLNVDIEDYGPPNPDYLSNVAQNLVEEMVEETLTSTLFKSNCPVTGQPDWASVTVRYFGMPIDHEGLLRYFISFRHHAEFHEQCVERIFQDVLQRCAPQCLAVEARYTRRGGLDINPLRTTSEMAWPLSVFRDPRQ</sequence>
<organism>
    <name type="scientific">Xylella fastidiosa (strain M23)</name>
    <dbReference type="NCBI Taxonomy" id="405441"/>
    <lineage>
        <taxon>Bacteria</taxon>
        <taxon>Pseudomonadati</taxon>
        <taxon>Pseudomonadota</taxon>
        <taxon>Gammaproteobacteria</taxon>
        <taxon>Lysobacterales</taxon>
        <taxon>Lysobacteraceae</taxon>
        <taxon>Xylella</taxon>
    </lineage>
</organism>
<reference key="1">
    <citation type="journal article" date="2010" name="J. Bacteriol.">
        <title>Whole genome sequences of two Xylella fastidiosa strains (M12 and M23) causing almond leaf scorch disease in California.</title>
        <authorList>
            <person name="Chen J."/>
            <person name="Xie G."/>
            <person name="Han S."/>
            <person name="Chertkov O."/>
            <person name="Sims D."/>
            <person name="Civerolo E.L."/>
        </authorList>
    </citation>
    <scope>NUCLEOTIDE SEQUENCE [LARGE SCALE GENOMIC DNA]</scope>
    <source>
        <strain>M23</strain>
    </source>
</reference>
<gene>
    <name evidence="1" type="primary">queF</name>
    <name type="ordered locus">XfasM23_1487</name>
</gene>
<comment type="function">
    <text evidence="1">Catalyzes the NADPH-dependent reduction of 7-cyano-7-deazaguanine (preQ0) to 7-aminomethyl-7-deazaguanine (preQ1).</text>
</comment>
<comment type="catalytic activity">
    <reaction evidence="1">
        <text>7-aminomethyl-7-carbaguanine + 2 NADP(+) = 7-cyano-7-deazaguanine + 2 NADPH + 3 H(+)</text>
        <dbReference type="Rhea" id="RHEA:13409"/>
        <dbReference type="ChEBI" id="CHEBI:15378"/>
        <dbReference type="ChEBI" id="CHEBI:45075"/>
        <dbReference type="ChEBI" id="CHEBI:57783"/>
        <dbReference type="ChEBI" id="CHEBI:58349"/>
        <dbReference type="ChEBI" id="CHEBI:58703"/>
        <dbReference type="EC" id="1.7.1.13"/>
    </reaction>
</comment>
<comment type="pathway">
    <text evidence="1">tRNA modification; tRNA-queuosine biosynthesis.</text>
</comment>
<comment type="subunit">
    <text evidence="1">Homodimer.</text>
</comment>
<comment type="subcellular location">
    <subcellularLocation>
        <location evidence="1">Cytoplasm</location>
    </subcellularLocation>
</comment>
<comment type="similarity">
    <text evidence="1">Belongs to the GTP cyclohydrolase I family. QueF type 2 subfamily.</text>
</comment>
<name>QUEF_XYLF2</name>
<feature type="chain" id="PRO_1000134286" description="NADPH-dependent 7-cyano-7-deazaguanine reductase">
    <location>
        <begin position="1"/>
        <end position="275"/>
    </location>
</feature>
<feature type="active site" description="Thioimide intermediate" evidence="1">
    <location>
        <position position="181"/>
    </location>
</feature>
<feature type="active site" description="Proton donor" evidence="1">
    <location>
        <position position="188"/>
    </location>
</feature>
<feature type="binding site" evidence="1">
    <location>
        <begin position="81"/>
        <end position="83"/>
    </location>
    <ligand>
        <name>substrate</name>
    </ligand>
</feature>
<feature type="binding site" evidence="1">
    <location>
        <begin position="83"/>
        <end position="84"/>
    </location>
    <ligand>
        <name>NADPH</name>
        <dbReference type="ChEBI" id="CHEBI:57783"/>
    </ligand>
</feature>
<feature type="binding site" evidence="1">
    <location>
        <begin position="220"/>
        <end position="221"/>
    </location>
    <ligand>
        <name>substrate</name>
    </ligand>
</feature>
<feature type="binding site" evidence="1">
    <location>
        <begin position="249"/>
        <end position="250"/>
    </location>
    <ligand>
        <name>NADPH</name>
        <dbReference type="ChEBI" id="CHEBI:57783"/>
    </ligand>
</feature>
<accession>B2I6I8</accession>